<organism>
    <name type="scientific">Xanthomonas euvesicatoria pv. vesicatoria (strain 85-10)</name>
    <name type="common">Xanthomonas campestris pv. vesicatoria</name>
    <dbReference type="NCBI Taxonomy" id="316273"/>
    <lineage>
        <taxon>Bacteria</taxon>
        <taxon>Pseudomonadati</taxon>
        <taxon>Pseudomonadota</taxon>
        <taxon>Gammaproteobacteria</taxon>
        <taxon>Lysobacterales</taxon>
        <taxon>Lysobacteraceae</taxon>
        <taxon>Xanthomonas</taxon>
    </lineage>
</organism>
<sequence>MNHSRSHALFAQAQTLLPGGVNSPVRAFKSVGGEPFFVARADGPYLFDVDDNRYIDYVGSWGPMIAGHNHPAVREAVERAIGNGLSFGAPCAAEVTMAQTITRLVPSCEMVRMVNSGTEATLSAVRLARGATGRNRIIKFEGCYHGHGDSFLVKAGSGMLTLGVPTSPGVPAGLSELTATLSFNDFEGATALFDEIGAEVAAVIIEPVVGNANCIPPQAGYLQHLRTLCTRHGALLIFDEVMTGFRVALGGAQAHYGVTPDLTTFGKIIGGGMPVGAYGGRRDLMEQVAPAGPIYQAGTLSGNPVAMAAGLAMLELVQEPGFHTRLSEATSMLCEGLEDAARAAGIAVTTNQVGGMFGLFFTDDIVESYAQATACDITSFNRFFHAMLQRGVYLAPSAYEAGFMSSAHDQAVIEATLAAAREAFADVAR</sequence>
<dbReference type="EC" id="5.4.3.8" evidence="1"/>
<dbReference type="EMBL" id="AM039952">
    <property type="protein sequence ID" value="CAJ25266.1"/>
    <property type="molecule type" value="Genomic_DNA"/>
</dbReference>
<dbReference type="RefSeq" id="WP_011348479.1">
    <property type="nucleotide sequence ID" value="NZ_CP017190.1"/>
</dbReference>
<dbReference type="SMR" id="Q3BPP7"/>
<dbReference type="STRING" id="456327.BJD11_05060"/>
<dbReference type="GeneID" id="97511614"/>
<dbReference type="KEGG" id="xcv:XCV3535"/>
<dbReference type="eggNOG" id="COG0001">
    <property type="taxonomic scope" value="Bacteria"/>
</dbReference>
<dbReference type="HOGENOM" id="CLU_016922_1_5_6"/>
<dbReference type="UniPathway" id="UPA00251">
    <property type="reaction ID" value="UER00317"/>
</dbReference>
<dbReference type="Proteomes" id="UP000007069">
    <property type="component" value="Chromosome"/>
</dbReference>
<dbReference type="GO" id="GO:0005737">
    <property type="term" value="C:cytoplasm"/>
    <property type="evidence" value="ECO:0007669"/>
    <property type="project" value="UniProtKB-SubCell"/>
</dbReference>
<dbReference type="GO" id="GO:0042286">
    <property type="term" value="F:glutamate-1-semialdehyde 2,1-aminomutase activity"/>
    <property type="evidence" value="ECO:0007669"/>
    <property type="project" value="UniProtKB-UniRule"/>
</dbReference>
<dbReference type="GO" id="GO:0030170">
    <property type="term" value="F:pyridoxal phosphate binding"/>
    <property type="evidence" value="ECO:0007669"/>
    <property type="project" value="InterPro"/>
</dbReference>
<dbReference type="GO" id="GO:0008483">
    <property type="term" value="F:transaminase activity"/>
    <property type="evidence" value="ECO:0007669"/>
    <property type="project" value="InterPro"/>
</dbReference>
<dbReference type="GO" id="GO:0006782">
    <property type="term" value="P:protoporphyrinogen IX biosynthetic process"/>
    <property type="evidence" value="ECO:0007669"/>
    <property type="project" value="UniProtKB-UniRule"/>
</dbReference>
<dbReference type="CDD" id="cd00610">
    <property type="entry name" value="OAT_like"/>
    <property type="match status" value="1"/>
</dbReference>
<dbReference type="FunFam" id="3.40.640.10:FF:000021">
    <property type="entry name" value="Glutamate-1-semialdehyde 2,1-aminomutase"/>
    <property type="match status" value="1"/>
</dbReference>
<dbReference type="Gene3D" id="3.90.1150.10">
    <property type="entry name" value="Aspartate Aminotransferase, domain 1"/>
    <property type="match status" value="1"/>
</dbReference>
<dbReference type="Gene3D" id="3.40.640.10">
    <property type="entry name" value="Type I PLP-dependent aspartate aminotransferase-like (Major domain)"/>
    <property type="match status" value="1"/>
</dbReference>
<dbReference type="HAMAP" id="MF_00375">
    <property type="entry name" value="HemL_aminotrans_3"/>
    <property type="match status" value="1"/>
</dbReference>
<dbReference type="InterPro" id="IPR004639">
    <property type="entry name" value="4pyrrol_synth_GluAld_NH2Trfase"/>
</dbReference>
<dbReference type="InterPro" id="IPR005814">
    <property type="entry name" value="Aminotrans_3"/>
</dbReference>
<dbReference type="InterPro" id="IPR049704">
    <property type="entry name" value="Aminotrans_3_PPA_site"/>
</dbReference>
<dbReference type="InterPro" id="IPR015424">
    <property type="entry name" value="PyrdxlP-dep_Trfase"/>
</dbReference>
<dbReference type="InterPro" id="IPR015421">
    <property type="entry name" value="PyrdxlP-dep_Trfase_major"/>
</dbReference>
<dbReference type="InterPro" id="IPR015422">
    <property type="entry name" value="PyrdxlP-dep_Trfase_small"/>
</dbReference>
<dbReference type="NCBIfam" id="TIGR00713">
    <property type="entry name" value="hemL"/>
    <property type="match status" value="1"/>
</dbReference>
<dbReference type="NCBIfam" id="NF000818">
    <property type="entry name" value="PRK00062.1"/>
    <property type="match status" value="1"/>
</dbReference>
<dbReference type="PANTHER" id="PTHR43713">
    <property type="entry name" value="GLUTAMATE-1-SEMIALDEHYDE 2,1-AMINOMUTASE"/>
    <property type="match status" value="1"/>
</dbReference>
<dbReference type="PANTHER" id="PTHR43713:SF3">
    <property type="entry name" value="GLUTAMATE-1-SEMIALDEHYDE 2,1-AMINOMUTASE 1, CHLOROPLASTIC-RELATED"/>
    <property type="match status" value="1"/>
</dbReference>
<dbReference type="Pfam" id="PF00202">
    <property type="entry name" value="Aminotran_3"/>
    <property type="match status" value="1"/>
</dbReference>
<dbReference type="SUPFAM" id="SSF53383">
    <property type="entry name" value="PLP-dependent transferases"/>
    <property type="match status" value="1"/>
</dbReference>
<dbReference type="PROSITE" id="PS00600">
    <property type="entry name" value="AA_TRANSFER_CLASS_3"/>
    <property type="match status" value="1"/>
</dbReference>
<name>GSA_XANE5</name>
<protein>
    <recommendedName>
        <fullName evidence="1">Glutamate-1-semialdehyde 2,1-aminomutase</fullName>
        <shortName evidence="1">GSA</shortName>
        <ecNumber evidence="1">5.4.3.8</ecNumber>
    </recommendedName>
    <alternativeName>
        <fullName evidence="1">Glutamate-1-semialdehyde aminotransferase</fullName>
        <shortName evidence="1">GSA-AT</shortName>
    </alternativeName>
</protein>
<comment type="catalytic activity">
    <reaction evidence="1">
        <text>(S)-4-amino-5-oxopentanoate = 5-aminolevulinate</text>
        <dbReference type="Rhea" id="RHEA:14265"/>
        <dbReference type="ChEBI" id="CHEBI:57501"/>
        <dbReference type="ChEBI" id="CHEBI:356416"/>
        <dbReference type="EC" id="5.4.3.8"/>
    </reaction>
</comment>
<comment type="cofactor">
    <cofactor evidence="1">
        <name>pyridoxal 5'-phosphate</name>
        <dbReference type="ChEBI" id="CHEBI:597326"/>
    </cofactor>
</comment>
<comment type="pathway">
    <text evidence="1">Porphyrin-containing compound metabolism; protoporphyrin-IX biosynthesis; 5-aminolevulinate from L-glutamyl-tRNA(Glu): step 2/2.</text>
</comment>
<comment type="subunit">
    <text evidence="1">Homodimer.</text>
</comment>
<comment type="subcellular location">
    <subcellularLocation>
        <location evidence="1">Cytoplasm</location>
    </subcellularLocation>
</comment>
<comment type="similarity">
    <text evidence="1">Belongs to the class-III pyridoxal-phosphate-dependent aminotransferase family. HemL subfamily.</text>
</comment>
<reference key="1">
    <citation type="journal article" date="2005" name="J. Bacteriol.">
        <title>Insights into genome plasticity and pathogenicity of the plant pathogenic Bacterium Xanthomonas campestris pv. vesicatoria revealed by the complete genome sequence.</title>
        <authorList>
            <person name="Thieme F."/>
            <person name="Koebnik R."/>
            <person name="Bekel T."/>
            <person name="Berger C."/>
            <person name="Boch J."/>
            <person name="Buettner D."/>
            <person name="Caldana C."/>
            <person name="Gaigalat L."/>
            <person name="Goesmann A."/>
            <person name="Kay S."/>
            <person name="Kirchner O."/>
            <person name="Lanz C."/>
            <person name="Linke B."/>
            <person name="McHardy A.C."/>
            <person name="Meyer F."/>
            <person name="Mittenhuber G."/>
            <person name="Nies D.H."/>
            <person name="Niesbach-Kloesgen U."/>
            <person name="Patschkowski T."/>
            <person name="Rueckert C."/>
            <person name="Rupp O."/>
            <person name="Schneiker S."/>
            <person name="Schuster S.C."/>
            <person name="Vorhoelter F.J."/>
            <person name="Weber E."/>
            <person name="Puehler A."/>
            <person name="Bonas U."/>
            <person name="Bartels D."/>
            <person name="Kaiser O."/>
        </authorList>
    </citation>
    <scope>NUCLEOTIDE SEQUENCE [LARGE SCALE GENOMIC DNA]</scope>
    <source>
        <strain>85-10</strain>
    </source>
</reference>
<evidence type="ECO:0000255" key="1">
    <source>
        <dbReference type="HAMAP-Rule" id="MF_00375"/>
    </source>
</evidence>
<gene>
    <name evidence="1" type="primary">hemL</name>
    <name type="ordered locus">XCV3535</name>
</gene>
<proteinExistence type="inferred from homology"/>
<keyword id="KW-0963">Cytoplasm</keyword>
<keyword id="KW-0413">Isomerase</keyword>
<keyword id="KW-0627">Porphyrin biosynthesis</keyword>
<keyword id="KW-0663">Pyridoxal phosphate</keyword>
<feature type="chain" id="PRO_0000243644" description="Glutamate-1-semialdehyde 2,1-aminomutase">
    <location>
        <begin position="1"/>
        <end position="429"/>
    </location>
</feature>
<feature type="modified residue" description="N6-(pyridoxal phosphate)lysine" evidence="1">
    <location>
        <position position="267"/>
    </location>
</feature>
<accession>Q3BPP7</accession>